<sequence length="64" mass="7414">MLNLEAIIETGEQVIQKISFNLQHISSVLNTEVFDPFDYCYYRGGNFWEIESAEDCSGDDEFIE</sequence>
<reference key="1">
    <citation type="journal article" date="1991" name="Virology">
        <title>A polycistronic mRNA specified by the coronavirus infectious bronchitis virus.</title>
        <authorList>
            <person name="Liu D.X."/>
            <person name="Cavanagh D."/>
            <person name="Green P."/>
            <person name="Inglis S.C."/>
        </authorList>
    </citation>
    <scope>NUCLEOTIDE SEQUENCE [GENOMIC RNA]</scope>
</reference>
<reference key="2">
    <citation type="journal article" date="1986" name="Nucleic Acids Res.">
        <title>Infectious bronchitis virus RNA D encodes three potential translation products.</title>
        <authorList>
            <person name="Niesters H.G.M."/>
            <person name="Zijderveld A.J."/>
            <person name="Seifert W.F."/>
            <person name="Lenstra J.A."/>
            <person name="Bleumink-Pluym N.M.C."/>
            <person name="Horzinek M.C."/>
            <person name="van der Zeijst B.A.M."/>
        </authorList>
    </citation>
    <scope>NUCLEOTIDE SEQUENCE [GENOMIC RNA]</scope>
</reference>
<reference key="3">
    <citation type="submission" date="2006-06" db="EMBL/GenBank/DDBJ databases">
        <title>Avian infectious bronchitis virus strain M41.</title>
        <authorList>
            <person name="Mondal S.P."/>
            <person name="Buckles E.L."/>
        </authorList>
    </citation>
    <scope>NUCLEOTIDE SEQUENCE [GENOMIC RNA]</scope>
</reference>
<reference key="4">
    <citation type="journal article" date="2006" name="J. Virol. Methods">
        <title>Development and evaluation of a real-time Taqman RT-PCR assay for the detection of infectious bronchitis virus from infected chickens.</title>
        <authorList>
            <person name="Callison S.A."/>
            <person name="Hilt D.A."/>
            <person name="Boynton T.O."/>
            <person name="Sample B.F."/>
            <person name="Robison R."/>
            <person name="Swayne D.E."/>
            <person name="Jackwood M.W."/>
        </authorList>
    </citation>
    <scope>NUCLEOTIDE SEQUENCE [GENOMIC RNA]</scope>
</reference>
<name>NS3B_IBVM</name>
<dbReference type="EMBL" id="X59542">
    <property type="protein sequence ID" value="CAA42116.1"/>
    <property type="molecule type" value="Genomic_RNA"/>
</dbReference>
<dbReference type="EMBL" id="X03723">
    <property type="protein sequence ID" value="CAA27359.1"/>
    <property type="molecule type" value="Genomic_RNA"/>
</dbReference>
<dbReference type="EMBL" id="DQ834384">
    <property type="protein sequence ID" value="ABI26425.1"/>
    <property type="molecule type" value="Genomic_RNA"/>
</dbReference>
<dbReference type="EMBL" id="AY851295">
    <property type="protein sequence ID" value="AAW33788.1"/>
    <property type="molecule type" value="Genomic_RNA"/>
</dbReference>
<dbReference type="PIR" id="E41038">
    <property type="entry name" value="WMIHB5"/>
</dbReference>
<dbReference type="SMR" id="P05138"/>
<dbReference type="Proteomes" id="UP000007642">
    <property type="component" value="Genome"/>
</dbReference>
<dbReference type="Proteomes" id="UP000096468">
    <property type="component" value="Genome"/>
</dbReference>
<dbReference type="InterPro" id="IPR005295">
    <property type="entry name" value="IBV_3B"/>
</dbReference>
<dbReference type="Pfam" id="PF03622">
    <property type="entry name" value="IBV_3B"/>
    <property type="match status" value="1"/>
</dbReference>
<gene>
    <name type="ORF">3b</name>
</gene>
<organism>
    <name type="scientific">Avian infectious bronchitis virus (strain M41)</name>
    <name type="common">IBV</name>
    <dbReference type="NCBI Taxonomy" id="11127"/>
    <lineage>
        <taxon>Viruses</taxon>
        <taxon>Riboviria</taxon>
        <taxon>Orthornavirae</taxon>
        <taxon>Pisuviricota</taxon>
        <taxon>Pisoniviricetes</taxon>
        <taxon>Nidovirales</taxon>
        <taxon>Cornidovirineae</taxon>
        <taxon>Coronaviridae</taxon>
        <taxon>Orthocoronavirinae</taxon>
        <taxon>Gammacoronavirus</taxon>
        <taxon>Igacovirus</taxon>
        <taxon>Avian coronavirus</taxon>
    </lineage>
</organism>
<protein>
    <recommendedName>
        <fullName>Non-structural protein 3b</fullName>
        <shortName>ns3b</shortName>
    </recommendedName>
    <alternativeName>
        <fullName>Accessory protein 3b</fullName>
    </alternativeName>
</protein>
<organismHost>
    <name type="scientific">Gallus gallus</name>
    <name type="common">Chicken</name>
    <dbReference type="NCBI Taxonomy" id="9031"/>
</organismHost>
<accession>P05138</accession>
<accession>Q5I5X7</accession>
<proteinExistence type="predicted"/>
<feature type="chain" id="PRO_0000106114" description="Non-structural protein 3b">
    <location>
        <begin position="1"/>
        <end position="64"/>
    </location>
</feature>